<reference key="1">
    <citation type="journal article" date="2004" name="Science">
        <title>The genomic sequence of the accidental pathogen Legionella pneumophila.</title>
        <authorList>
            <person name="Chien M."/>
            <person name="Morozova I."/>
            <person name="Shi S."/>
            <person name="Sheng H."/>
            <person name="Chen J."/>
            <person name="Gomez S.M."/>
            <person name="Asamani G."/>
            <person name="Hill K."/>
            <person name="Nuara J."/>
            <person name="Feder M."/>
            <person name="Rineer J."/>
            <person name="Greenberg J.J."/>
            <person name="Steshenko V."/>
            <person name="Park S.H."/>
            <person name="Zhao B."/>
            <person name="Teplitskaya E."/>
            <person name="Edwards J.R."/>
            <person name="Pampou S."/>
            <person name="Georghiou A."/>
            <person name="Chou I.-C."/>
            <person name="Iannuccilli W."/>
            <person name="Ulz M.E."/>
            <person name="Kim D.H."/>
            <person name="Geringer-Sameth A."/>
            <person name="Goldsberry C."/>
            <person name="Morozov P."/>
            <person name="Fischer S.G."/>
            <person name="Segal G."/>
            <person name="Qu X."/>
            <person name="Rzhetsky A."/>
            <person name="Zhang P."/>
            <person name="Cayanis E."/>
            <person name="De Jong P.J."/>
            <person name="Ju J."/>
            <person name="Kalachikov S."/>
            <person name="Shuman H.A."/>
            <person name="Russo J.J."/>
        </authorList>
    </citation>
    <scope>NUCLEOTIDE SEQUENCE [LARGE SCALE GENOMIC DNA]</scope>
    <source>
        <strain>Philadelphia 1 / ATCC 33152 / DSM 7513</strain>
    </source>
</reference>
<organism>
    <name type="scientific">Legionella pneumophila subsp. pneumophila (strain Philadelphia 1 / ATCC 33152 / DSM 7513)</name>
    <dbReference type="NCBI Taxonomy" id="272624"/>
    <lineage>
        <taxon>Bacteria</taxon>
        <taxon>Pseudomonadati</taxon>
        <taxon>Pseudomonadota</taxon>
        <taxon>Gammaproteobacteria</taxon>
        <taxon>Legionellales</taxon>
        <taxon>Legionellaceae</taxon>
        <taxon>Legionella</taxon>
    </lineage>
</organism>
<gene>
    <name type="ordered locus">lpg0643</name>
</gene>
<proteinExistence type="inferred from homology"/>
<feature type="chain" id="PRO_0000391039" description="UPF0761 membrane protein lpg0643">
    <location>
        <begin position="1"/>
        <end position="412"/>
    </location>
</feature>
<feature type="transmembrane region" description="Helical" evidence="1">
    <location>
        <begin position="36"/>
        <end position="56"/>
    </location>
</feature>
<feature type="transmembrane region" description="Helical" evidence="1">
    <location>
        <begin position="99"/>
        <end position="119"/>
    </location>
</feature>
<feature type="transmembrane region" description="Helical" evidence="1">
    <location>
        <begin position="137"/>
        <end position="157"/>
    </location>
</feature>
<feature type="transmembrane region" description="Helical" evidence="1">
    <location>
        <begin position="177"/>
        <end position="197"/>
    </location>
</feature>
<feature type="transmembrane region" description="Helical" evidence="1">
    <location>
        <begin position="210"/>
        <end position="230"/>
    </location>
</feature>
<feature type="transmembrane region" description="Helical" evidence="1">
    <location>
        <begin position="241"/>
        <end position="261"/>
    </location>
</feature>
<comment type="subcellular location">
    <subcellularLocation>
        <location evidence="1">Cell inner membrane</location>
        <topology evidence="1">Multi-pass membrane protein</topology>
    </subcellularLocation>
</comment>
<comment type="similarity">
    <text evidence="1">Belongs to the UPF0761 family.</text>
</comment>
<keyword id="KW-0997">Cell inner membrane</keyword>
<keyword id="KW-1003">Cell membrane</keyword>
<keyword id="KW-0472">Membrane</keyword>
<keyword id="KW-1185">Reference proteome</keyword>
<keyword id="KW-0812">Transmembrane</keyword>
<keyword id="KW-1133">Transmembrane helix</keyword>
<dbReference type="EMBL" id="AE017354">
    <property type="protein sequence ID" value="AAU26732.1"/>
    <property type="molecule type" value="Genomic_DNA"/>
</dbReference>
<dbReference type="RefSeq" id="WP_010946380.1">
    <property type="nucleotide sequence ID" value="NC_002942.5"/>
</dbReference>
<dbReference type="RefSeq" id="YP_094679.1">
    <property type="nucleotide sequence ID" value="NC_002942.5"/>
</dbReference>
<dbReference type="SMR" id="Q5ZXT8"/>
<dbReference type="STRING" id="272624.lpg0643"/>
<dbReference type="PaxDb" id="272624-lpg0643"/>
<dbReference type="DNASU" id="3078458"/>
<dbReference type="KEGG" id="lpn:lpg0643"/>
<dbReference type="PATRIC" id="fig|272624.6.peg.661"/>
<dbReference type="eggNOG" id="COG1295">
    <property type="taxonomic scope" value="Bacteria"/>
</dbReference>
<dbReference type="HOGENOM" id="CLU_032288_1_0_6"/>
<dbReference type="OrthoDB" id="9808671at2"/>
<dbReference type="Proteomes" id="UP000000609">
    <property type="component" value="Chromosome"/>
</dbReference>
<dbReference type="GO" id="GO:0005886">
    <property type="term" value="C:plasma membrane"/>
    <property type="evidence" value="ECO:0007669"/>
    <property type="project" value="UniProtKB-SubCell"/>
</dbReference>
<dbReference type="HAMAP" id="MF_00672">
    <property type="entry name" value="UPF0761"/>
    <property type="match status" value="1"/>
</dbReference>
<dbReference type="InterPro" id="IPR023679">
    <property type="entry name" value="UPF0761_bac"/>
</dbReference>
<dbReference type="InterPro" id="IPR017039">
    <property type="entry name" value="Virul_fac_BrkB"/>
</dbReference>
<dbReference type="NCBIfam" id="TIGR00765">
    <property type="entry name" value="yihY_not_rbn"/>
    <property type="match status" value="1"/>
</dbReference>
<dbReference type="PANTHER" id="PTHR30213">
    <property type="entry name" value="INNER MEMBRANE PROTEIN YHJD"/>
    <property type="match status" value="1"/>
</dbReference>
<dbReference type="PANTHER" id="PTHR30213:SF0">
    <property type="entry name" value="UPF0761 MEMBRANE PROTEIN YIHY"/>
    <property type="match status" value="1"/>
</dbReference>
<dbReference type="Pfam" id="PF03631">
    <property type="entry name" value="Virul_fac_BrkB"/>
    <property type="match status" value="1"/>
</dbReference>
<protein>
    <recommendedName>
        <fullName evidence="1">UPF0761 membrane protein lpg0643</fullName>
    </recommendedName>
</protein>
<name>Y643_LEGPH</name>
<accession>Q5ZXT8</accession>
<sequence>MNWKDKVKTTFYSCDRFVRFVIQHFIQDDCTYIASALAFTSLLAVVPLMSVGLAIFSSFPVFQGLAEPVQNFIFDNFVPATGKIVQSYLQQFTSQVSKLSIWGIVFLIFTALLVMFTIERAMNKIWRVSSSRHGVSAFLLYWAIISLAPVLLGLSLAASSYLFSMPILADHRAPYTILHYSPFFLSLIGFTFLYVVVPNCPVKIRHAFWGGLVAAILFESAKHAFAYYLIRYNTYALLYGAFATVPIFFIWVYWVWIITLLGAEISYAFSVHHQRRGGKSLDGFSHALLWLHQLWLAQQHGKGLSFNDLVDASKQPFAVDVDEMINALIYHELIHATADGHYMLSRDLSHVTLYDLTQLLPYRLPTHLELQYSKASLAEQWRAAFKRHNEELKKSLDINLEELFKKTGTVIK</sequence>
<evidence type="ECO:0000255" key="1">
    <source>
        <dbReference type="HAMAP-Rule" id="MF_00672"/>
    </source>
</evidence>